<keyword id="KW-0067">ATP-binding</keyword>
<keyword id="KW-0436">Ligase</keyword>
<keyword id="KW-0460">Magnesium</keyword>
<keyword id="KW-0479">Metal-binding</keyword>
<keyword id="KW-0547">Nucleotide-binding</keyword>
<keyword id="KW-1185">Reference proteome</keyword>
<keyword id="KW-0816">Tricarboxylic acid cycle</keyword>
<gene>
    <name evidence="1" type="primary">sucC</name>
    <name type="ordered locus">Ssed_2812</name>
</gene>
<feature type="chain" id="PRO_1000082228" description="Succinate--CoA ligase [ADP-forming] subunit beta">
    <location>
        <begin position="1"/>
        <end position="388"/>
    </location>
</feature>
<feature type="domain" description="ATP-grasp" evidence="1">
    <location>
        <begin position="9"/>
        <end position="244"/>
    </location>
</feature>
<feature type="binding site" evidence="1">
    <location>
        <position position="46"/>
    </location>
    <ligand>
        <name>ATP</name>
        <dbReference type="ChEBI" id="CHEBI:30616"/>
    </ligand>
</feature>
<feature type="binding site" evidence="1">
    <location>
        <begin position="53"/>
        <end position="55"/>
    </location>
    <ligand>
        <name>ATP</name>
        <dbReference type="ChEBI" id="CHEBI:30616"/>
    </ligand>
</feature>
<feature type="binding site" evidence="1">
    <location>
        <position position="99"/>
    </location>
    <ligand>
        <name>ATP</name>
        <dbReference type="ChEBI" id="CHEBI:30616"/>
    </ligand>
</feature>
<feature type="binding site" evidence="1">
    <location>
        <position position="102"/>
    </location>
    <ligand>
        <name>ATP</name>
        <dbReference type="ChEBI" id="CHEBI:30616"/>
    </ligand>
</feature>
<feature type="binding site" evidence="1">
    <location>
        <position position="107"/>
    </location>
    <ligand>
        <name>ATP</name>
        <dbReference type="ChEBI" id="CHEBI:30616"/>
    </ligand>
</feature>
<feature type="binding site" evidence="1">
    <location>
        <position position="199"/>
    </location>
    <ligand>
        <name>Mg(2+)</name>
        <dbReference type="ChEBI" id="CHEBI:18420"/>
    </ligand>
</feature>
<feature type="binding site" evidence="1">
    <location>
        <position position="213"/>
    </location>
    <ligand>
        <name>Mg(2+)</name>
        <dbReference type="ChEBI" id="CHEBI:18420"/>
    </ligand>
</feature>
<feature type="binding site" evidence="1">
    <location>
        <position position="264"/>
    </location>
    <ligand>
        <name>substrate</name>
        <note>ligand shared with subunit alpha</note>
    </ligand>
</feature>
<feature type="binding site" evidence="1">
    <location>
        <begin position="321"/>
        <end position="323"/>
    </location>
    <ligand>
        <name>substrate</name>
        <note>ligand shared with subunit alpha</note>
    </ligand>
</feature>
<comment type="function">
    <text evidence="1">Succinyl-CoA synthetase functions in the citric acid cycle (TCA), coupling the hydrolysis of succinyl-CoA to the synthesis of either ATP or GTP and thus represents the only step of substrate-level phosphorylation in the TCA. The beta subunit provides nucleotide specificity of the enzyme and binds the substrate succinate, while the binding sites for coenzyme A and phosphate are found in the alpha subunit.</text>
</comment>
<comment type="catalytic activity">
    <reaction evidence="1">
        <text>succinate + ATP + CoA = succinyl-CoA + ADP + phosphate</text>
        <dbReference type="Rhea" id="RHEA:17661"/>
        <dbReference type="ChEBI" id="CHEBI:30031"/>
        <dbReference type="ChEBI" id="CHEBI:30616"/>
        <dbReference type="ChEBI" id="CHEBI:43474"/>
        <dbReference type="ChEBI" id="CHEBI:57287"/>
        <dbReference type="ChEBI" id="CHEBI:57292"/>
        <dbReference type="ChEBI" id="CHEBI:456216"/>
        <dbReference type="EC" id="6.2.1.5"/>
    </reaction>
    <physiologicalReaction direction="right-to-left" evidence="1">
        <dbReference type="Rhea" id="RHEA:17663"/>
    </physiologicalReaction>
</comment>
<comment type="catalytic activity">
    <reaction evidence="1">
        <text>GTP + succinate + CoA = succinyl-CoA + GDP + phosphate</text>
        <dbReference type="Rhea" id="RHEA:22120"/>
        <dbReference type="ChEBI" id="CHEBI:30031"/>
        <dbReference type="ChEBI" id="CHEBI:37565"/>
        <dbReference type="ChEBI" id="CHEBI:43474"/>
        <dbReference type="ChEBI" id="CHEBI:57287"/>
        <dbReference type="ChEBI" id="CHEBI:57292"/>
        <dbReference type="ChEBI" id="CHEBI:58189"/>
    </reaction>
    <physiologicalReaction direction="right-to-left" evidence="1">
        <dbReference type="Rhea" id="RHEA:22122"/>
    </physiologicalReaction>
</comment>
<comment type="cofactor">
    <cofactor evidence="1">
        <name>Mg(2+)</name>
        <dbReference type="ChEBI" id="CHEBI:18420"/>
    </cofactor>
    <text evidence="1">Binds 1 Mg(2+) ion per subunit.</text>
</comment>
<comment type="pathway">
    <text evidence="1">Carbohydrate metabolism; tricarboxylic acid cycle; succinate from succinyl-CoA (ligase route): step 1/1.</text>
</comment>
<comment type="subunit">
    <text evidence="1">Heterotetramer of two alpha and two beta subunits.</text>
</comment>
<comment type="similarity">
    <text evidence="1">Belongs to the succinate/malate CoA ligase beta subunit family.</text>
</comment>
<dbReference type="EC" id="6.2.1.5" evidence="1"/>
<dbReference type="EMBL" id="CP000821">
    <property type="protein sequence ID" value="ABV37419.1"/>
    <property type="molecule type" value="Genomic_DNA"/>
</dbReference>
<dbReference type="RefSeq" id="WP_012143149.1">
    <property type="nucleotide sequence ID" value="NC_009831.1"/>
</dbReference>
<dbReference type="SMR" id="A8FX46"/>
<dbReference type="STRING" id="425104.Ssed_2812"/>
<dbReference type="KEGG" id="sse:Ssed_2812"/>
<dbReference type="eggNOG" id="COG0045">
    <property type="taxonomic scope" value="Bacteria"/>
</dbReference>
<dbReference type="HOGENOM" id="CLU_037430_0_2_6"/>
<dbReference type="OrthoDB" id="9802602at2"/>
<dbReference type="UniPathway" id="UPA00223">
    <property type="reaction ID" value="UER00999"/>
</dbReference>
<dbReference type="Proteomes" id="UP000002015">
    <property type="component" value="Chromosome"/>
</dbReference>
<dbReference type="GO" id="GO:0005829">
    <property type="term" value="C:cytosol"/>
    <property type="evidence" value="ECO:0007669"/>
    <property type="project" value="TreeGrafter"/>
</dbReference>
<dbReference type="GO" id="GO:0042709">
    <property type="term" value="C:succinate-CoA ligase complex"/>
    <property type="evidence" value="ECO:0007669"/>
    <property type="project" value="TreeGrafter"/>
</dbReference>
<dbReference type="GO" id="GO:0005524">
    <property type="term" value="F:ATP binding"/>
    <property type="evidence" value="ECO:0007669"/>
    <property type="project" value="UniProtKB-UniRule"/>
</dbReference>
<dbReference type="GO" id="GO:0000287">
    <property type="term" value="F:magnesium ion binding"/>
    <property type="evidence" value="ECO:0007669"/>
    <property type="project" value="UniProtKB-UniRule"/>
</dbReference>
<dbReference type="GO" id="GO:0004775">
    <property type="term" value="F:succinate-CoA ligase (ADP-forming) activity"/>
    <property type="evidence" value="ECO:0007669"/>
    <property type="project" value="UniProtKB-UniRule"/>
</dbReference>
<dbReference type="GO" id="GO:0004776">
    <property type="term" value="F:succinate-CoA ligase (GDP-forming) activity"/>
    <property type="evidence" value="ECO:0007669"/>
    <property type="project" value="RHEA"/>
</dbReference>
<dbReference type="GO" id="GO:0006104">
    <property type="term" value="P:succinyl-CoA metabolic process"/>
    <property type="evidence" value="ECO:0007669"/>
    <property type="project" value="TreeGrafter"/>
</dbReference>
<dbReference type="GO" id="GO:0006099">
    <property type="term" value="P:tricarboxylic acid cycle"/>
    <property type="evidence" value="ECO:0007669"/>
    <property type="project" value="UniProtKB-UniRule"/>
</dbReference>
<dbReference type="FunFam" id="3.30.1490.20:FF:000002">
    <property type="entry name" value="Succinate--CoA ligase [ADP-forming] subunit beta"/>
    <property type="match status" value="1"/>
</dbReference>
<dbReference type="FunFam" id="3.30.470.20:FF:000002">
    <property type="entry name" value="Succinate--CoA ligase [ADP-forming] subunit beta"/>
    <property type="match status" value="1"/>
</dbReference>
<dbReference type="FunFam" id="3.40.50.261:FF:000001">
    <property type="entry name" value="Succinate--CoA ligase [ADP-forming] subunit beta"/>
    <property type="match status" value="1"/>
</dbReference>
<dbReference type="Gene3D" id="3.30.1490.20">
    <property type="entry name" value="ATP-grasp fold, A domain"/>
    <property type="match status" value="1"/>
</dbReference>
<dbReference type="Gene3D" id="3.30.470.20">
    <property type="entry name" value="ATP-grasp fold, B domain"/>
    <property type="match status" value="1"/>
</dbReference>
<dbReference type="Gene3D" id="3.40.50.261">
    <property type="entry name" value="Succinyl-CoA synthetase domains"/>
    <property type="match status" value="1"/>
</dbReference>
<dbReference type="HAMAP" id="MF_00558">
    <property type="entry name" value="Succ_CoA_beta"/>
    <property type="match status" value="1"/>
</dbReference>
<dbReference type="InterPro" id="IPR011761">
    <property type="entry name" value="ATP-grasp"/>
</dbReference>
<dbReference type="InterPro" id="IPR013650">
    <property type="entry name" value="ATP-grasp_succ-CoA_synth-type"/>
</dbReference>
<dbReference type="InterPro" id="IPR013815">
    <property type="entry name" value="ATP_grasp_subdomain_1"/>
</dbReference>
<dbReference type="InterPro" id="IPR017866">
    <property type="entry name" value="Succ-CoA_synthase_bsu_CS"/>
</dbReference>
<dbReference type="InterPro" id="IPR005811">
    <property type="entry name" value="SUCC_ACL_C"/>
</dbReference>
<dbReference type="InterPro" id="IPR005809">
    <property type="entry name" value="Succ_CoA_ligase-like_bsu"/>
</dbReference>
<dbReference type="InterPro" id="IPR016102">
    <property type="entry name" value="Succinyl-CoA_synth-like"/>
</dbReference>
<dbReference type="NCBIfam" id="NF001913">
    <property type="entry name" value="PRK00696.1"/>
    <property type="match status" value="1"/>
</dbReference>
<dbReference type="NCBIfam" id="TIGR01016">
    <property type="entry name" value="sucCoAbeta"/>
    <property type="match status" value="1"/>
</dbReference>
<dbReference type="PANTHER" id="PTHR11815:SF10">
    <property type="entry name" value="SUCCINATE--COA LIGASE [GDP-FORMING] SUBUNIT BETA, MITOCHONDRIAL"/>
    <property type="match status" value="1"/>
</dbReference>
<dbReference type="PANTHER" id="PTHR11815">
    <property type="entry name" value="SUCCINYL-COA SYNTHETASE BETA CHAIN"/>
    <property type="match status" value="1"/>
</dbReference>
<dbReference type="Pfam" id="PF08442">
    <property type="entry name" value="ATP-grasp_2"/>
    <property type="match status" value="1"/>
</dbReference>
<dbReference type="Pfam" id="PF00549">
    <property type="entry name" value="Ligase_CoA"/>
    <property type="match status" value="1"/>
</dbReference>
<dbReference type="PIRSF" id="PIRSF001554">
    <property type="entry name" value="SucCS_beta"/>
    <property type="match status" value="1"/>
</dbReference>
<dbReference type="SUPFAM" id="SSF56059">
    <property type="entry name" value="Glutathione synthetase ATP-binding domain-like"/>
    <property type="match status" value="1"/>
</dbReference>
<dbReference type="SUPFAM" id="SSF52210">
    <property type="entry name" value="Succinyl-CoA synthetase domains"/>
    <property type="match status" value="1"/>
</dbReference>
<dbReference type="PROSITE" id="PS50975">
    <property type="entry name" value="ATP_GRASP"/>
    <property type="match status" value="1"/>
</dbReference>
<dbReference type="PROSITE" id="PS01217">
    <property type="entry name" value="SUCCINYL_COA_LIG_3"/>
    <property type="match status" value="1"/>
</dbReference>
<reference key="1">
    <citation type="submission" date="2007-08" db="EMBL/GenBank/DDBJ databases">
        <title>Complete sequence of Shewanella sediminis HAW-EB3.</title>
        <authorList>
            <consortium name="US DOE Joint Genome Institute"/>
            <person name="Copeland A."/>
            <person name="Lucas S."/>
            <person name="Lapidus A."/>
            <person name="Barry K."/>
            <person name="Glavina del Rio T."/>
            <person name="Dalin E."/>
            <person name="Tice H."/>
            <person name="Pitluck S."/>
            <person name="Chertkov O."/>
            <person name="Brettin T."/>
            <person name="Bruce D."/>
            <person name="Detter J.C."/>
            <person name="Han C."/>
            <person name="Schmutz J."/>
            <person name="Larimer F."/>
            <person name="Land M."/>
            <person name="Hauser L."/>
            <person name="Kyrpides N."/>
            <person name="Kim E."/>
            <person name="Zhao J.-S."/>
            <person name="Richardson P."/>
        </authorList>
    </citation>
    <scope>NUCLEOTIDE SEQUENCE [LARGE SCALE GENOMIC DNA]</scope>
    <source>
        <strain>HAW-EB3</strain>
    </source>
</reference>
<accession>A8FX46</accession>
<evidence type="ECO:0000255" key="1">
    <source>
        <dbReference type="HAMAP-Rule" id="MF_00558"/>
    </source>
</evidence>
<proteinExistence type="inferred from homology"/>
<organism>
    <name type="scientific">Shewanella sediminis (strain HAW-EB3)</name>
    <dbReference type="NCBI Taxonomy" id="425104"/>
    <lineage>
        <taxon>Bacteria</taxon>
        <taxon>Pseudomonadati</taxon>
        <taxon>Pseudomonadota</taxon>
        <taxon>Gammaproteobacteria</taxon>
        <taxon>Alteromonadales</taxon>
        <taxon>Shewanellaceae</taxon>
        <taxon>Shewanella</taxon>
    </lineage>
</organism>
<protein>
    <recommendedName>
        <fullName evidence="1">Succinate--CoA ligase [ADP-forming] subunit beta</fullName>
        <ecNumber evidence="1">6.2.1.5</ecNumber>
    </recommendedName>
    <alternativeName>
        <fullName evidence="1">Succinyl-CoA synthetase subunit beta</fullName>
        <shortName evidence="1">SCS-beta</shortName>
    </alternativeName>
</protein>
<name>SUCC_SHESH</name>
<sequence length="388" mass="41477">MNLHEYQAKALFAEYGLPVSEGFACDTPQEAVEAAGRIGGDMWVVKCQVHAGGRGKAGGVKVTGSKDEIRAFAEHWLGKNLVTYQTDEKGQPVAKILVESCTDIANELYLGAVVDRSTRRVVFMASTEGGVEIETVAEETPELIHKAIIDPLTGPQPYQARDLGFKLGLNPTQMKQFTKVFMGLAKMFEDHDFALLEINPLVITDEGNIHCLDGKIGIDGNALFRQEKIRDMHDPSQDDAREAHAAKFELNYVALDGNVGCMVNGAGLAMGTMDIVNLHGGKPANFLDVGGGATKERVAEAFKIILSDDNVKAVLVNIFGGIVRCDMIAEGIIGAVKEVGVTVPVVVRLEGTNADLGRDVLASSDLDIIAATSLTDAAEQVVKAAEGK</sequence>